<sequence>MQKYISEARLLLALAIPVILAQIAQTAMGFVDTVMAGGYSATDMAAVAIGTSIWLPAILFGHGLLLALTPVIAQLNGSGRRERIAHQVRQGFWLAGFVSVLIMLVLWNAGYIIRYMENIDPALADKAVGYLRALLWGAPGYLFFQVARNQCEGLAKTKPGMVMGFIGLLVNIPVNYIFIYGHFGMPELGGVGCGVATAAVYWVMFLAMVSYIKRARSMRDIRNEKGTAKPEPAVMKRLIQLGLPIALALFFEVTLFAVVALLVSPLGIVDVAGHQIALNFSSLMFVLPMSLAAAVTIRVGYRLGQGSTLDAQTAARTGLMVGVCMATLTAIFTVSLREQIALLYNDNPEVVTLAAHLMLLAAVYQISDSIQVIGSGILRGYKDTRSIFYITFTAYWVLGLPSGYILALTDLVVEPMGPAGFWIGFIIGLTSAAIMMMLRMRFLQRMPSAIILQRASR</sequence>
<proteinExistence type="inferred from homology"/>
<accession>Q7UAH8</accession>
<organism>
    <name type="scientific">Shigella flexneri</name>
    <dbReference type="NCBI Taxonomy" id="623"/>
    <lineage>
        <taxon>Bacteria</taxon>
        <taxon>Pseudomonadati</taxon>
        <taxon>Pseudomonadota</taxon>
        <taxon>Gammaproteobacteria</taxon>
        <taxon>Enterobacterales</taxon>
        <taxon>Enterobacteriaceae</taxon>
        <taxon>Shigella</taxon>
    </lineage>
</organism>
<feature type="chain" id="PRO_0000164191" description="Multidrug resistance protein MdtK">
    <location>
        <begin position="1"/>
        <end position="457"/>
    </location>
</feature>
<feature type="topological domain" description="Cytoplasmic" evidence="2">
    <location>
        <begin position="1"/>
        <end position="10"/>
    </location>
</feature>
<feature type="transmembrane region" description="Helical" evidence="2">
    <location>
        <begin position="11"/>
        <end position="31"/>
    </location>
</feature>
<feature type="topological domain" description="Extracellular" evidence="2">
    <location>
        <begin position="32"/>
        <end position="52"/>
    </location>
</feature>
<feature type="transmembrane region" description="Helical" evidence="2">
    <location>
        <begin position="53"/>
        <end position="73"/>
    </location>
</feature>
<feature type="topological domain" description="Cytoplasmic" evidence="2">
    <location>
        <begin position="74"/>
        <end position="92"/>
    </location>
</feature>
<feature type="transmembrane region" description="Helical" evidence="2">
    <location>
        <begin position="93"/>
        <end position="113"/>
    </location>
</feature>
<feature type="topological domain" description="Extracellular" evidence="2">
    <location>
        <begin position="114"/>
        <end position="126"/>
    </location>
</feature>
<feature type="transmembrane region" description="Helical" evidence="2">
    <location>
        <begin position="127"/>
        <end position="147"/>
    </location>
</feature>
<feature type="topological domain" description="Cytoplasmic" evidence="2">
    <location>
        <begin position="148"/>
        <end position="159"/>
    </location>
</feature>
<feature type="transmembrane region" description="Helical" evidence="2">
    <location>
        <begin position="160"/>
        <end position="180"/>
    </location>
</feature>
<feature type="topological domain" description="Extracellular" evidence="2">
    <location>
        <begin position="181"/>
        <end position="188"/>
    </location>
</feature>
<feature type="transmembrane region" description="Helical" evidence="2">
    <location>
        <begin position="189"/>
        <end position="209"/>
    </location>
</feature>
<feature type="topological domain" description="Cytoplasmic" evidence="2">
    <location>
        <begin position="210"/>
        <end position="242"/>
    </location>
</feature>
<feature type="transmembrane region" description="Helical" evidence="2">
    <location>
        <begin position="243"/>
        <end position="263"/>
    </location>
</feature>
<feature type="topological domain" description="Extracellular" evidence="2">
    <location>
        <begin position="264"/>
        <end position="275"/>
    </location>
</feature>
<feature type="transmembrane region" description="Helical" evidence="2">
    <location>
        <begin position="276"/>
        <end position="296"/>
    </location>
</feature>
<feature type="topological domain" description="Cytoplasmic" evidence="2">
    <location>
        <begin position="297"/>
        <end position="313"/>
    </location>
</feature>
<feature type="transmembrane region" description="Helical" evidence="2">
    <location>
        <begin position="314"/>
        <end position="334"/>
    </location>
</feature>
<feature type="topological domain" description="Extracellular" evidence="2">
    <location>
        <begin position="335"/>
        <end position="349"/>
    </location>
</feature>
<feature type="transmembrane region" description="Helical" evidence="2">
    <location>
        <begin position="350"/>
        <end position="370"/>
    </location>
</feature>
<feature type="topological domain" description="Cytoplasmic" evidence="2">
    <location>
        <begin position="371"/>
        <end position="386"/>
    </location>
</feature>
<feature type="transmembrane region" description="Helical" evidence="2">
    <location>
        <begin position="387"/>
        <end position="407"/>
    </location>
</feature>
<feature type="topological domain" description="Extracellular" evidence="2">
    <location>
        <begin position="408"/>
        <end position="417"/>
    </location>
</feature>
<feature type="transmembrane region" description="Helical" evidence="2">
    <location>
        <begin position="418"/>
        <end position="438"/>
    </location>
</feature>
<feature type="topological domain" description="Cytoplasmic" evidence="2">
    <location>
        <begin position="439"/>
        <end position="457"/>
    </location>
</feature>
<reference key="1">
    <citation type="journal article" date="2002" name="Nucleic Acids Res.">
        <title>Genome sequence of Shigella flexneri 2a: insights into pathogenicity through comparison with genomes of Escherichia coli K12 and O157.</title>
        <authorList>
            <person name="Jin Q."/>
            <person name="Yuan Z."/>
            <person name="Xu J."/>
            <person name="Wang Y."/>
            <person name="Shen Y."/>
            <person name="Lu W."/>
            <person name="Wang J."/>
            <person name="Liu H."/>
            <person name="Yang J."/>
            <person name="Yang F."/>
            <person name="Zhang X."/>
            <person name="Zhang J."/>
            <person name="Yang G."/>
            <person name="Wu H."/>
            <person name="Qu D."/>
            <person name="Dong J."/>
            <person name="Sun L."/>
            <person name="Xue Y."/>
            <person name="Zhao A."/>
            <person name="Gao Y."/>
            <person name="Zhu J."/>
            <person name="Kan B."/>
            <person name="Ding K."/>
            <person name="Chen S."/>
            <person name="Cheng H."/>
            <person name="Yao Z."/>
            <person name="He B."/>
            <person name="Chen R."/>
            <person name="Ma D."/>
            <person name="Qiang B."/>
            <person name="Wen Y."/>
            <person name="Hou Y."/>
            <person name="Yu J."/>
        </authorList>
    </citation>
    <scope>NUCLEOTIDE SEQUENCE [LARGE SCALE GENOMIC DNA]</scope>
    <source>
        <strain>301 / Serotype 2a</strain>
    </source>
</reference>
<reference key="2">
    <citation type="journal article" date="2003" name="Infect. Immun.">
        <title>Complete genome sequence and comparative genomics of Shigella flexneri serotype 2a strain 2457T.</title>
        <authorList>
            <person name="Wei J."/>
            <person name="Goldberg M.B."/>
            <person name="Burland V."/>
            <person name="Venkatesan M.M."/>
            <person name="Deng W."/>
            <person name="Fournier G."/>
            <person name="Mayhew G.F."/>
            <person name="Plunkett G. III"/>
            <person name="Rose D.J."/>
            <person name="Darling A."/>
            <person name="Mau B."/>
            <person name="Perna N.T."/>
            <person name="Payne S.M."/>
            <person name="Runyen-Janecky L.J."/>
            <person name="Zhou S."/>
            <person name="Schwartz D.C."/>
            <person name="Blattner F.R."/>
        </authorList>
    </citation>
    <scope>NUCLEOTIDE SEQUENCE [LARGE SCALE GENOMIC DNA]</scope>
    <source>
        <strain>ATCC 700930 / 2457T / Serotype 2a</strain>
    </source>
</reference>
<gene>
    <name type="primary">mdtK</name>
    <name type="ordered locus">SF1691</name>
    <name type="ordered locus">S1823</name>
</gene>
<comment type="function">
    <text evidence="1">Multidrug efflux pump that functions probably as a Na(+)/drug antiporter.</text>
</comment>
<comment type="subcellular location">
    <subcellularLocation>
        <location evidence="1">Cell inner membrane</location>
        <topology evidence="1">Multi-pass membrane protein</topology>
    </subcellularLocation>
</comment>
<comment type="similarity">
    <text evidence="3">Belongs to the multi antimicrobial extrusion (MATE) (TC 2.A.66.1) family. MdtK subfamily.</text>
</comment>
<comment type="caution">
    <text evidence="3">PubMed:12384590 (AE005674) sequence differs from that shown due to the presence of an insertion sequence. In strain 301, this gene is probably a pseudogene.</text>
</comment>
<name>MDTK_SHIFL</name>
<evidence type="ECO:0000250" key="1"/>
<evidence type="ECO:0000255" key="2"/>
<evidence type="ECO:0000305" key="3"/>
<dbReference type="EMBL" id="AE005674">
    <property type="status" value="NOT_ANNOTATED_CDS"/>
    <property type="molecule type" value="Genomic_DNA"/>
</dbReference>
<dbReference type="EMBL" id="AE014073">
    <property type="protein sequence ID" value="AAP17159.1"/>
    <property type="molecule type" value="Genomic_DNA"/>
</dbReference>
<dbReference type="RefSeq" id="WP_001174969.1">
    <property type="nucleotide sequence ID" value="NZ_WPGW01000025.1"/>
</dbReference>
<dbReference type="SMR" id="Q7UAH8"/>
<dbReference type="KEGG" id="sfx:S1823"/>
<dbReference type="PATRIC" id="fig|623.158.peg.1864"/>
<dbReference type="HOGENOM" id="CLU_012893_6_0_6"/>
<dbReference type="Proteomes" id="UP000001006">
    <property type="component" value="Chromosome"/>
</dbReference>
<dbReference type="Proteomes" id="UP000002673">
    <property type="component" value="Chromosome"/>
</dbReference>
<dbReference type="GO" id="GO:0005886">
    <property type="term" value="C:plasma membrane"/>
    <property type="evidence" value="ECO:0007669"/>
    <property type="project" value="UniProtKB-SubCell"/>
</dbReference>
<dbReference type="GO" id="GO:0015297">
    <property type="term" value="F:antiporter activity"/>
    <property type="evidence" value="ECO:0007669"/>
    <property type="project" value="UniProtKB-UniRule"/>
</dbReference>
<dbReference type="GO" id="GO:0042910">
    <property type="term" value="F:xenobiotic transmembrane transporter activity"/>
    <property type="evidence" value="ECO:0007669"/>
    <property type="project" value="UniProtKB-UniRule"/>
</dbReference>
<dbReference type="GO" id="GO:0006814">
    <property type="term" value="P:sodium ion transport"/>
    <property type="evidence" value="ECO:0007669"/>
    <property type="project" value="UniProtKB-UniRule"/>
</dbReference>
<dbReference type="GO" id="GO:0006855">
    <property type="term" value="P:xenobiotic transmembrane transport"/>
    <property type="evidence" value="ECO:0007669"/>
    <property type="project" value="UniProtKB-UniRule"/>
</dbReference>
<dbReference type="CDD" id="cd13131">
    <property type="entry name" value="MATE_NorM_like"/>
    <property type="match status" value="1"/>
</dbReference>
<dbReference type="HAMAP" id="MF_00400">
    <property type="entry name" value="MdtK"/>
    <property type="match status" value="1"/>
</dbReference>
<dbReference type="InterPro" id="IPR002528">
    <property type="entry name" value="MATE_fam"/>
</dbReference>
<dbReference type="InterPro" id="IPR050222">
    <property type="entry name" value="MATE_MdtK"/>
</dbReference>
<dbReference type="InterPro" id="IPR048279">
    <property type="entry name" value="MdtK-like"/>
</dbReference>
<dbReference type="InterPro" id="IPR022913">
    <property type="entry name" value="Multidrug-R_MdtK"/>
</dbReference>
<dbReference type="NCBIfam" id="TIGR00797">
    <property type="entry name" value="matE"/>
    <property type="match status" value="1"/>
</dbReference>
<dbReference type="PANTHER" id="PTHR43298:SF2">
    <property type="entry name" value="FMN_FAD EXPORTER YEEO-RELATED"/>
    <property type="match status" value="1"/>
</dbReference>
<dbReference type="PANTHER" id="PTHR43298">
    <property type="entry name" value="MULTIDRUG RESISTANCE PROTEIN NORM-RELATED"/>
    <property type="match status" value="1"/>
</dbReference>
<dbReference type="Pfam" id="PF01554">
    <property type="entry name" value="MatE"/>
    <property type="match status" value="2"/>
</dbReference>
<dbReference type="PIRSF" id="PIRSF006603">
    <property type="entry name" value="DinF"/>
    <property type="match status" value="1"/>
</dbReference>
<keyword id="KW-0050">Antiport</keyword>
<keyword id="KW-0997">Cell inner membrane</keyword>
<keyword id="KW-1003">Cell membrane</keyword>
<keyword id="KW-0406">Ion transport</keyword>
<keyword id="KW-0472">Membrane</keyword>
<keyword id="KW-1185">Reference proteome</keyword>
<keyword id="KW-0915">Sodium</keyword>
<keyword id="KW-0739">Sodium transport</keyword>
<keyword id="KW-0812">Transmembrane</keyword>
<keyword id="KW-1133">Transmembrane helix</keyword>
<keyword id="KW-0813">Transport</keyword>
<protein>
    <recommendedName>
        <fullName>Multidrug resistance protein MdtK</fullName>
    </recommendedName>
    <alternativeName>
        <fullName>Multidrug-efflux transporter</fullName>
    </alternativeName>
</protein>